<keyword id="KW-0175">Coiled coil</keyword>
<keyword id="KW-0597">Phosphoprotein</keyword>
<keyword id="KW-1185">Reference proteome</keyword>
<keyword id="KW-0833">Ubl conjugation pathway</keyword>
<accession>Q9S9Q9</accession>
<gene>
    <name type="ordered locus">At1g30440</name>
    <name type="ORF">F26G16.2</name>
</gene>
<dbReference type="EMBL" id="AC009917">
    <property type="protein sequence ID" value="AAF19742.1"/>
    <property type="status" value="ALT_INIT"/>
    <property type="molecule type" value="Genomic_DNA"/>
</dbReference>
<dbReference type="EMBL" id="CP002684">
    <property type="protein sequence ID" value="AEE31216.1"/>
    <property type="molecule type" value="Genomic_DNA"/>
</dbReference>
<dbReference type="PIR" id="G86428">
    <property type="entry name" value="G86428"/>
</dbReference>
<dbReference type="RefSeq" id="NP_174332.1">
    <property type="nucleotide sequence ID" value="NM_102780.3"/>
</dbReference>
<dbReference type="BioGRID" id="25158">
    <property type="interactions" value="2"/>
</dbReference>
<dbReference type="FunCoup" id="Q9S9Q9">
    <property type="interactions" value="1398"/>
</dbReference>
<dbReference type="IntAct" id="Q9S9Q9">
    <property type="interactions" value="1"/>
</dbReference>
<dbReference type="MINT" id="Q9S9Q9"/>
<dbReference type="STRING" id="3702.Q9S9Q9"/>
<dbReference type="iPTMnet" id="Q9S9Q9"/>
<dbReference type="PaxDb" id="3702-AT1G30440.1"/>
<dbReference type="ProteomicsDB" id="234309"/>
<dbReference type="EnsemblPlants" id="AT1G30440.1">
    <property type="protein sequence ID" value="AT1G30440.1"/>
    <property type="gene ID" value="AT1G30440"/>
</dbReference>
<dbReference type="GeneID" id="839923"/>
<dbReference type="Gramene" id="AT1G30440.1">
    <property type="protein sequence ID" value="AT1G30440.1"/>
    <property type="gene ID" value="AT1G30440"/>
</dbReference>
<dbReference type="KEGG" id="ath:AT1G30440"/>
<dbReference type="Araport" id="AT1G30440"/>
<dbReference type="TAIR" id="AT1G30440"/>
<dbReference type="eggNOG" id="ENOG502RRH3">
    <property type="taxonomic scope" value="Eukaryota"/>
</dbReference>
<dbReference type="HOGENOM" id="CLU_005994_6_2_1"/>
<dbReference type="InParanoid" id="Q9S9Q9"/>
<dbReference type="OMA" id="YLPGINR"/>
<dbReference type="OrthoDB" id="624345at2759"/>
<dbReference type="PhylomeDB" id="Q9S9Q9"/>
<dbReference type="UniPathway" id="UPA00143"/>
<dbReference type="PRO" id="PR:Q9S9Q9"/>
<dbReference type="Proteomes" id="UP000006548">
    <property type="component" value="Chromosome 1"/>
</dbReference>
<dbReference type="ExpressionAtlas" id="Q9S9Q9">
    <property type="expression patterns" value="baseline and differential"/>
</dbReference>
<dbReference type="GO" id="GO:0005634">
    <property type="term" value="C:nucleus"/>
    <property type="evidence" value="ECO:0007005"/>
    <property type="project" value="TAIR"/>
</dbReference>
<dbReference type="GO" id="GO:0005886">
    <property type="term" value="C:plasma membrane"/>
    <property type="evidence" value="ECO:0007005"/>
    <property type="project" value="TAIR"/>
</dbReference>
<dbReference type="GO" id="GO:0016567">
    <property type="term" value="P:protein ubiquitination"/>
    <property type="evidence" value="ECO:0007669"/>
    <property type="project" value="UniProtKB-UniPathway"/>
</dbReference>
<dbReference type="CDD" id="cd18312">
    <property type="entry name" value="BTB_POZ_NPY3-like"/>
    <property type="match status" value="1"/>
</dbReference>
<dbReference type="Gene3D" id="3.30.710.10">
    <property type="entry name" value="Potassium Channel Kv1.1, Chain A"/>
    <property type="match status" value="1"/>
</dbReference>
<dbReference type="InterPro" id="IPR000210">
    <property type="entry name" value="BTB/POZ_dom"/>
</dbReference>
<dbReference type="InterPro" id="IPR043454">
    <property type="entry name" value="NPH3/RPT2-like"/>
</dbReference>
<dbReference type="InterPro" id="IPR027356">
    <property type="entry name" value="NPH3_dom"/>
</dbReference>
<dbReference type="InterPro" id="IPR011333">
    <property type="entry name" value="SKP1/BTB/POZ_sf"/>
</dbReference>
<dbReference type="PANTHER" id="PTHR32370">
    <property type="entry name" value="OS12G0117600 PROTEIN"/>
    <property type="match status" value="1"/>
</dbReference>
<dbReference type="Pfam" id="PF00651">
    <property type="entry name" value="BTB"/>
    <property type="match status" value="1"/>
</dbReference>
<dbReference type="Pfam" id="PF03000">
    <property type="entry name" value="NPH3"/>
    <property type="match status" value="1"/>
</dbReference>
<dbReference type="SUPFAM" id="SSF54695">
    <property type="entry name" value="POZ domain"/>
    <property type="match status" value="1"/>
</dbReference>
<dbReference type="PROSITE" id="PS50097">
    <property type="entry name" value="BTB"/>
    <property type="match status" value="1"/>
</dbReference>
<dbReference type="PROSITE" id="PS51649">
    <property type="entry name" value="NPH3"/>
    <property type="match status" value="1"/>
</dbReference>
<protein>
    <recommendedName>
        <fullName>BTB/POZ domain-containing protein At1g30440</fullName>
    </recommendedName>
</protein>
<comment type="function">
    <text evidence="1">May act as a substrate-specific adapter of an E3 ubiquitin-protein ligase complex (CUL3-RBX1-BTB) which mediates the ubiquitination and subsequent proteasomal degradation of target proteins.</text>
</comment>
<comment type="pathway">
    <text>Protein modification; protein ubiquitination.</text>
</comment>
<comment type="domain">
    <text evidence="7">The BTB/POZ domain mediates the interaction with some component of ubiquitin ligase complexes.</text>
</comment>
<comment type="similarity">
    <text evidence="5">Belongs to the NPH3 family.</text>
</comment>
<comment type="caution">
    <text evidence="8">It is uncertain whether Met-1 or Met-4 is the initiator.</text>
</comment>
<comment type="sequence caution" evidence="8">
    <conflict type="erroneous initiation">
        <sequence resource="EMBL-CDS" id="AAF19742"/>
    </conflict>
    <text>Truncated N-terminus.</text>
</comment>
<name>Y1044_ARATH</name>
<organism>
    <name type="scientific">Arabidopsis thaliana</name>
    <name type="common">Mouse-ear cress</name>
    <dbReference type="NCBI Taxonomy" id="3702"/>
    <lineage>
        <taxon>Eukaryota</taxon>
        <taxon>Viridiplantae</taxon>
        <taxon>Streptophyta</taxon>
        <taxon>Embryophyta</taxon>
        <taxon>Tracheophyta</taxon>
        <taxon>Spermatophyta</taxon>
        <taxon>Magnoliopsida</taxon>
        <taxon>eudicotyledons</taxon>
        <taxon>Gunneridae</taxon>
        <taxon>Pentapetalae</taxon>
        <taxon>rosids</taxon>
        <taxon>malvids</taxon>
        <taxon>Brassicales</taxon>
        <taxon>Brassicaceae</taxon>
        <taxon>Camelineae</taxon>
        <taxon>Arabidopsis</taxon>
    </lineage>
</organism>
<evidence type="ECO:0000250" key="1"/>
<evidence type="ECO:0000250" key="2">
    <source>
        <dbReference type="UniProtKB" id="Q9FMF5"/>
    </source>
</evidence>
<evidence type="ECO:0000255" key="3"/>
<evidence type="ECO:0000255" key="4">
    <source>
        <dbReference type="PROSITE-ProRule" id="PRU00037"/>
    </source>
</evidence>
<evidence type="ECO:0000255" key="5">
    <source>
        <dbReference type="PROSITE-ProRule" id="PRU00982"/>
    </source>
</evidence>
<evidence type="ECO:0000256" key="6">
    <source>
        <dbReference type="SAM" id="MobiDB-lite"/>
    </source>
</evidence>
<evidence type="ECO:0000269" key="7">
    <source>
    </source>
</evidence>
<evidence type="ECO:0000305" key="8"/>
<evidence type="ECO:0007744" key="9">
    <source>
    </source>
</evidence>
<evidence type="ECO:0007744" key="10">
    <source>
    </source>
</evidence>
<proteinExistence type="evidence at protein level"/>
<reference key="1">
    <citation type="journal article" date="2000" name="Nature">
        <title>Sequence and analysis of chromosome 1 of the plant Arabidopsis thaliana.</title>
        <authorList>
            <person name="Theologis A."/>
            <person name="Ecker J.R."/>
            <person name="Palm C.J."/>
            <person name="Federspiel N.A."/>
            <person name="Kaul S."/>
            <person name="White O."/>
            <person name="Alonso J."/>
            <person name="Altafi H."/>
            <person name="Araujo R."/>
            <person name="Bowman C.L."/>
            <person name="Brooks S.Y."/>
            <person name="Buehler E."/>
            <person name="Chan A."/>
            <person name="Chao Q."/>
            <person name="Chen H."/>
            <person name="Cheuk R.F."/>
            <person name="Chin C.W."/>
            <person name="Chung M.K."/>
            <person name="Conn L."/>
            <person name="Conway A.B."/>
            <person name="Conway A.R."/>
            <person name="Creasy T.H."/>
            <person name="Dewar K."/>
            <person name="Dunn P."/>
            <person name="Etgu P."/>
            <person name="Feldblyum T.V."/>
            <person name="Feng J.-D."/>
            <person name="Fong B."/>
            <person name="Fujii C.Y."/>
            <person name="Gill J.E."/>
            <person name="Goldsmith A.D."/>
            <person name="Haas B."/>
            <person name="Hansen N.F."/>
            <person name="Hughes B."/>
            <person name="Huizar L."/>
            <person name="Hunter J.L."/>
            <person name="Jenkins J."/>
            <person name="Johnson-Hopson C."/>
            <person name="Khan S."/>
            <person name="Khaykin E."/>
            <person name="Kim C.J."/>
            <person name="Koo H.L."/>
            <person name="Kremenetskaia I."/>
            <person name="Kurtz D.B."/>
            <person name="Kwan A."/>
            <person name="Lam B."/>
            <person name="Langin-Hooper S."/>
            <person name="Lee A."/>
            <person name="Lee J.M."/>
            <person name="Lenz C.A."/>
            <person name="Li J.H."/>
            <person name="Li Y.-P."/>
            <person name="Lin X."/>
            <person name="Liu S.X."/>
            <person name="Liu Z.A."/>
            <person name="Luros J.S."/>
            <person name="Maiti R."/>
            <person name="Marziali A."/>
            <person name="Militscher J."/>
            <person name="Miranda M."/>
            <person name="Nguyen M."/>
            <person name="Nierman W.C."/>
            <person name="Osborne B.I."/>
            <person name="Pai G."/>
            <person name="Peterson J."/>
            <person name="Pham P.K."/>
            <person name="Rizzo M."/>
            <person name="Rooney T."/>
            <person name="Rowley D."/>
            <person name="Sakano H."/>
            <person name="Salzberg S.L."/>
            <person name="Schwartz J.R."/>
            <person name="Shinn P."/>
            <person name="Southwick A.M."/>
            <person name="Sun H."/>
            <person name="Tallon L.J."/>
            <person name="Tambunga G."/>
            <person name="Toriumi M.J."/>
            <person name="Town C.D."/>
            <person name="Utterback T."/>
            <person name="Van Aken S."/>
            <person name="Vaysberg M."/>
            <person name="Vysotskaia V.S."/>
            <person name="Walker M."/>
            <person name="Wu D."/>
            <person name="Yu G."/>
            <person name="Fraser C.M."/>
            <person name="Venter J.C."/>
            <person name="Davis R.W."/>
        </authorList>
    </citation>
    <scope>NUCLEOTIDE SEQUENCE [LARGE SCALE GENOMIC DNA]</scope>
    <source>
        <strain>cv. Columbia</strain>
    </source>
</reference>
<reference key="2">
    <citation type="journal article" date="2017" name="Plant J.">
        <title>Araport11: a complete reannotation of the Arabidopsis thaliana reference genome.</title>
        <authorList>
            <person name="Cheng C.Y."/>
            <person name="Krishnakumar V."/>
            <person name="Chan A.P."/>
            <person name="Thibaud-Nissen F."/>
            <person name="Schobel S."/>
            <person name="Town C.D."/>
        </authorList>
    </citation>
    <scope>GENOME REANNOTATION</scope>
    <source>
        <strain>cv. Columbia</strain>
    </source>
</reference>
<reference key="3">
    <citation type="journal article" date="2005" name="J. Biol. Chem.">
        <title>Cullins 3a and 3b assemble with members of the broad complex/tramtrack/bric-a-brac (BTB) protein family to form essential ubiquitin-protein ligases (E3s) in Arabidopsis.</title>
        <authorList>
            <person name="Gingerich D.J."/>
            <person name="Gagne J.M."/>
            <person name="Salter D.W."/>
            <person name="Hellmann H."/>
            <person name="Estelle M."/>
            <person name="Ma L."/>
            <person name="Vierstra R.D."/>
        </authorList>
    </citation>
    <scope>DOMAIN BTB</scope>
</reference>
<reference key="4">
    <citation type="journal article" date="2009" name="J. Proteomics">
        <title>Phosphoproteomic analysis of nuclei-enriched fractions from Arabidopsis thaliana.</title>
        <authorList>
            <person name="Jones A.M.E."/>
            <person name="MacLean D."/>
            <person name="Studholme D.J."/>
            <person name="Serna-Sanz A."/>
            <person name="Andreasson E."/>
            <person name="Rathjen J.P."/>
            <person name="Peck S.C."/>
        </authorList>
    </citation>
    <scope>PHOSPHORYLATION [LARGE SCALE ANALYSIS] AT SER-279</scope>
    <scope>IDENTIFICATION BY MASS SPECTROMETRY [LARGE SCALE ANALYSIS]</scope>
    <source>
        <strain>cv. Columbia</strain>
    </source>
</reference>
<reference key="5">
    <citation type="journal article" date="2009" name="Plant Physiol.">
        <title>Large-scale Arabidopsis phosphoproteome profiling reveals novel chloroplast kinase substrates and phosphorylation networks.</title>
        <authorList>
            <person name="Reiland S."/>
            <person name="Messerli G."/>
            <person name="Baerenfaller K."/>
            <person name="Gerrits B."/>
            <person name="Endler A."/>
            <person name="Grossmann J."/>
            <person name="Gruissem W."/>
            <person name="Baginsky S."/>
        </authorList>
    </citation>
    <scope>PHOSPHORYLATION [LARGE SCALE ANALYSIS] AT SER-279</scope>
    <scope>IDENTIFICATION BY MASS SPECTROMETRY [LARGE SCALE ANALYSIS]</scope>
</reference>
<sequence>MACMKLGSKSDAFQRQGQAWFCTTGLPSDIVVEVGEMSFHLHKFPLLSRSGVMERRIAEASKEGDDKCLIEISDLPGGDKTFELVAKFCYGVKLELTASNVVYLRCAAEHLEMTEEHGEGNLISQTETFFNQVVLKSWKDSIKALHSCDEVLEYADELNITKKCIESLAMRASTDPNLFGWPVVEHGGPMQSPGGSVLWNGISTGARPKHTSSDWWYEDASMLSFPLFKRLITVMESRGIREDIIAGSLTYYTRKHLPGLKRRRGGPESSGRFSTPLGSGNVLSEEEQKNLLEEIQELLRMQKGLVPTKFFVDMLRIAKILKASPDCIANLEKRIGMQLDQAALEDLVMPSFSHTMETLYDVDSVQRILDHFLGTDQIMPGGVGSPCSSVDDGNLIGSPQSITPMTAVAKLIDGYLAEVAPDVNLKLPKFQALAASIPEYARLLDDGLYRAIDIYLKHHPWLAETERENLCRLLDCQKLSLEACTHAAQNERLPLRIIVQVLFFEQLQLRTSVAGCFLVSDNLDGGSRQLRSGGYVGGPNEGGGGGGGWATAVRENQVLKVGMDSMRMRVCELEKECSNMRQEIEKLGKTTKGGGSASNGVGSKTWENVSKKLGFGFKLKSHQMCSAQEGSVSKSNNENVKIEKLKDVKERRGKHKKASSISSER</sequence>
<feature type="chain" id="PRO_0000315354" description="BTB/POZ domain-containing protein At1g30440">
    <location>
        <begin position="1"/>
        <end position="665"/>
    </location>
</feature>
<feature type="domain" description="BTB" evidence="4">
    <location>
        <begin position="28"/>
        <end position="98"/>
    </location>
</feature>
<feature type="domain" description="NPH3" evidence="5">
    <location>
        <begin position="214"/>
        <end position="508"/>
    </location>
</feature>
<feature type="region of interest" description="Disordered" evidence="6">
    <location>
        <begin position="260"/>
        <end position="280"/>
    </location>
</feature>
<feature type="region of interest" description="Disordered" evidence="6">
    <location>
        <begin position="626"/>
        <end position="665"/>
    </location>
</feature>
<feature type="coiled-coil region" evidence="3">
    <location>
        <begin position="281"/>
        <end position="306"/>
    </location>
</feature>
<feature type="compositionally biased region" description="Polar residues" evidence="6">
    <location>
        <begin position="271"/>
        <end position="280"/>
    </location>
</feature>
<feature type="compositionally biased region" description="Polar residues" evidence="6">
    <location>
        <begin position="626"/>
        <end position="639"/>
    </location>
</feature>
<feature type="compositionally biased region" description="Basic and acidic residues" evidence="6">
    <location>
        <begin position="640"/>
        <end position="650"/>
    </location>
</feature>
<feature type="modified residue" description="Phosphoserine" evidence="9 10">
    <location>
        <position position="279"/>
    </location>
</feature>
<feature type="modified residue" description="Phosphotyrosine" evidence="2">
    <location>
        <position position="449"/>
    </location>
</feature>